<proteinExistence type="inferred from homology"/>
<organism>
    <name type="scientific">Rhizobium etli (strain ATCC 51251 / DSM 11541 / JCM 21823 / NBRC 15573 / CFN 42)</name>
    <dbReference type="NCBI Taxonomy" id="347834"/>
    <lineage>
        <taxon>Bacteria</taxon>
        <taxon>Pseudomonadati</taxon>
        <taxon>Pseudomonadota</taxon>
        <taxon>Alphaproteobacteria</taxon>
        <taxon>Hyphomicrobiales</taxon>
        <taxon>Rhizobiaceae</taxon>
        <taxon>Rhizobium/Agrobacterium group</taxon>
        <taxon>Rhizobium</taxon>
    </lineage>
</organism>
<evidence type="ECO:0000255" key="1">
    <source>
        <dbReference type="HAMAP-Rule" id="MF_00019"/>
    </source>
</evidence>
<evidence type="ECO:0000305" key="2"/>
<gene>
    <name evidence="1" type="primary">plsX</name>
    <name type="ordered locus">RHE_CH01531</name>
</gene>
<keyword id="KW-0963">Cytoplasm</keyword>
<keyword id="KW-0444">Lipid biosynthesis</keyword>
<keyword id="KW-0443">Lipid metabolism</keyword>
<keyword id="KW-0594">Phospholipid biosynthesis</keyword>
<keyword id="KW-1208">Phospholipid metabolism</keyword>
<keyword id="KW-1185">Reference proteome</keyword>
<keyword id="KW-0808">Transferase</keyword>
<sequence>MIRISLDLMGGDFGPQVVIPGAAKALDRHPDISFVFYGLKEQCDPFLAKFPKLKEKSVFHDCELAVSMEEKPSQALRRGRYVSTMWRSIEAVKTGDADVAVSAGNTGALMAMAKFCLRTMANIERPAIAAIWPTLKGESIVLDVGATIGADAQQLMDFALMGGAMARALFEIERPTIGLLNVGVEEVKGQEEVKEAGRLLREANIDSLEYSGFVEGNDLGKGTVDVVVTEGFSGNIALKTAEGTAKQIAEYLRAAMSRTLLARIGYLFAKSAFDMLREKLDPSKVNGGVFLGLNGIVIKSHGGANAEGIAAAIEVGYDMAKNGLNQKIENDLKKYHAKRLPPIGPEAA</sequence>
<feature type="chain" id="PRO_0000329258" description="Phosphate acyltransferase">
    <location>
        <begin position="1"/>
        <end position="348"/>
    </location>
</feature>
<comment type="function">
    <text evidence="1">Catalyzes the reversible formation of acyl-phosphate (acyl-PO(4)) from acyl-[acyl-carrier-protein] (acyl-ACP). This enzyme utilizes acyl-ACP as fatty acyl donor, but not acyl-CoA.</text>
</comment>
<comment type="catalytic activity">
    <reaction evidence="1">
        <text>a fatty acyl-[ACP] + phosphate = an acyl phosphate + holo-[ACP]</text>
        <dbReference type="Rhea" id="RHEA:42292"/>
        <dbReference type="Rhea" id="RHEA-COMP:9685"/>
        <dbReference type="Rhea" id="RHEA-COMP:14125"/>
        <dbReference type="ChEBI" id="CHEBI:43474"/>
        <dbReference type="ChEBI" id="CHEBI:59918"/>
        <dbReference type="ChEBI" id="CHEBI:64479"/>
        <dbReference type="ChEBI" id="CHEBI:138651"/>
        <dbReference type="EC" id="2.3.1.274"/>
    </reaction>
</comment>
<comment type="pathway">
    <text evidence="1">Lipid metabolism; phospholipid metabolism.</text>
</comment>
<comment type="subunit">
    <text evidence="1">Homodimer. Probably interacts with PlsY.</text>
</comment>
<comment type="subcellular location">
    <subcellularLocation>
        <location evidence="1">Cytoplasm</location>
    </subcellularLocation>
    <text evidence="1">Associated with the membrane possibly through PlsY.</text>
</comment>
<comment type="similarity">
    <text evidence="1">Belongs to the PlsX family.</text>
</comment>
<comment type="sequence caution" evidence="2">
    <conflict type="erroneous initiation">
        <sequence resource="EMBL-CDS" id="ABC90334"/>
    </conflict>
</comment>
<accession>Q2KA02</accession>
<name>PLSX_RHIEC</name>
<reference key="1">
    <citation type="journal article" date="2006" name="Proc. Natl. Acad. Sci. U.S.A.">
        <title>The partitioned Rhizobium etli genome: genetic and metabolic redundancy in seven interacting replicons.</title>
        <authorList>
            <person name="Gonzalez V."/>
            <person name="Santamaria R.I."/>
            <person name="Bustos P."/>
            <person name="Hernandez-Gonzalez I."/>
            <person name="Medrano-Soto A."/>
            <person name="Moreno-Hagelsieb G."/>
            <person name="Janga S.C."/>
            <person name="Ramirez M.A."/>
            <person name="Jimenez-Jacinto V."/>
            <person name="Collado-Vides J."/>
            <person name="Davila G."/>
        </authorList>
    </citation>
    <scope>NUCLEOTIDE SEQUENCE [LARGE SCALE GENOMIC DNA]</scope>
    <source>
        <strain>ATCC 51251 / DSM 11541 / JCM 21823 / NBRC 15573 / CFN 42</strain>
    </source>
</reference>
<protein>
    <recommendedName>
        <fullName evidence="1">Phosphate acyltransferase</fullName>
        <ecNumber evidence="1">2.3.1.274</ecNumber>
    </recommendedName>
    <alternativeName>
        <fullName evidence="1">Acyl-ACP phosphotransacylase</fullName>
    </alternativeName>
    <alternativeName>
        <fullName evidence="1">Acyl-[acyl-carrier-protein]--phosphate acyltransferase</fullName>
    </alternativeName>
    <alternativeName>
        <fullName evidence="1">Phosphate-acyl-ACP acyltransferase</fullName>
    </alternativeName>
</protein>
<dbReference type="EC" id="2.3.1.274" evidence="1"/>
<dbReference type="EMBL" id="CP000133">
    <property type="protein sequence ID" value="ABC90334.1"/>
    <property type="status" value="ALT_INIT"/>
    <property type="molecule type" value="Genomic_DNA"/>
</dbReference>
<dbReference type="RefSeq" id="WP_020920961.1">
    <property type="nucleotide sequence ID" value="NC_007761.1"/>
</dbReference>
<dbReference type="SMR" id="Q2KA02"/>
<dbReference type="KEGG" id="ret:RHE_CH01531"/>
<dbReference type="eggNOG" id="COG0416">
    <property type="taxonomic scope" value="Bacteria"/>
</dbReference>
<dbReference type="HOGENOM" id="CLU_039379_1_0_5"/>
<dbReference type="OrthoDB" id="9806408at2"/>
<dbReference type="UniPathway" id="UPA00085"/>
<dbReference type="Proteomes" id="UP000001936">
    <property type="component" value="Chromosome"/>
</dbReference>
<dbReference type="GO" id="GO:0005737">
    <property type="term" value="C:cytoplasm"/>
    <property type="evidence" value="ECO:0007669"/>
    <property type="project" value="UniProtKB-SubCell"/>
</dbReference>
<dbReference type="GO" id="GO:0043811">
    <property type="term" value="F:phosphate:acyl-[acyl carrier protein] acyltransferase activity"/>
    <property type="evidence" value="ECO:0007669"/>
    <property type="project" value="UniProtKB-UniRule"/>
</dbReference>
<dbReference type="GO" id="GO:0006633">
    <property type="term" value="P:fatty acid biosynthetic process"/>
    <property type="evidence" value="ECO:0007669"/>
    <property type="project" value="UniProtKB-UniRule"/>
</dbReference>
<dbReference type="GO" id="GO:0008654">
    <property type="term" value="P:phospholipid biosynthetic process"/>
    <property type="evidence" value="ECO:0007669"/>
    <property type="project" value="UniProtKB-KW"/>
</dbReference>
<dbReference type="Gene3D" id="3.40.718.10">
    <property type="entry name" value="Isopropylmalate Dehydrogenase"/>
    <property type="match status" value="1"/>
</dbReference>
<dbReference type="HAMAP" id="MF_00019">
    <property type="entry name" value="PlsX"/>
    <property type="match status" value="1"/>
</dbReference>
<dbReference type="InterPro" id="IPR003664">
    <property type="entry name" value="FA_synthesis"/>
</dbReference>
<dbReference type="InterPro" id="IPR012281">
    <property type="entry name" value="Phospholipid_synth_PlsX-like"/>
</dbReference>
<dbReference type="NCBIfam" id="TIGR00182">
    <property type="entry name" value="plsX"/>
    <property type="match status" value="1"/>
</dbReference>
<dbReference type="PANTHER" id="PTHR30100">
    <property type="entry name" value="FATTY ACID/PHOSPHOLIPID SYNTHESIS PROTEIN PLSX"/>
    <property type="match status" value="1"/>
</dbReference>
<dbReference type="PANTHER" id="PTHR30100:SF1">
    <property type="entry name" value="PHOSPHATE ACYLTRANSFERASE"/>
    <property type="match status" value="1"/>
</dbReference>
<dbReference type="Pfam" id="PF02504">
    <property type="entry name" value="FA_synthesis"/>
    <property type="match status" value="1"/>
</dbReference>
<dbReference type="PIRSF" id="PIRSF002465">
    <property type="entry name" value="Phsphlp_syn_PlsX"/>
    <property type="match status" value="1"/>
</dbReference>
<dbReference type="SUPFAM" id="SSF53659">
    <property type="entry name" value="Isocitrate/Isopropylmalate dehydrogenase-like"/>
    <property type="match status" value="1"/>
</dbReference>